<sequence length="64" mass="7146">MCCLPVFVILLLLIASAPSVDALPKTKDDMSLASFHDNAKRTLQILSNKRYCCVYDYSCCLSWG</sequence>
<dbReference type="EMBL" id="AF214976">
    <property type="protein sequence ID" value="AAG60404.1"/>
    <property type="molecule type" value="mRNA"/>
</dbReference>
<dbReference type="ConoServer" id="663">
    <property type="toxin name" value="Pn-B01121 precursor"/>
</dbReference>
<dbReference type="GO" id="GO:0005576">
    <property type="term" value="C:extracellular region"/>
    <property type="evidence" value="ECO:0007669"/>
    <property type="project" value="UniProtKB-SubCell"/>
</dbReference>
<dbReference type="GO" id="GO:0090729">
    <property type="term" value="F:toxin activity"/>
    <property type="evidence" value="ECO:0007669"/>
    <property type="project" value="UniProtKB-KW"/>
</dbReference>
<dbReference type="InterPro" id="IPR031565">
    <property type="entry name" value="T-conotoxin"/>
</dbReference>
<dbReference type="Pfam" id="PF16981">
    <property type="entry name" value="Chi-conotoxin"/>
    <property type="match status" value="1"/>
</dbReference>
<evidence type="ECO:0000250" key="1"/>
<evidence type="ECO:0000255" key="2"/>
<evidence type="ECO:0000305" key="3"/>
<evidence type="ECO:0000305" key="4">
    <source>
    </source>
</evidence>
<evidence type="ECO:0000312" key="5">
    <source>
        <dbReference type="EMBL" id="AAG60404.1"/>
    </source>
</evidence>
<keyword id="KW-0027">Amidation</keyword>
<keyword id="KW-0165">Cleavage on pair of basic residues</keyword>
<keyword id="KW-1015">Disulfide bond</keyword>
<keyword id="KW-0964">Secreted</keyword>
<keyword id="KW-0732">Signal</keyword>
<keyword id="KW-0800">Toxin</keyword>
<reference key="1">
    <citation type="journal article" date="2001" name="Mol. Biol. Evol.">
        <title>Mechanisms for evolving hypervariability: the case of conopeptides.</title>
        <authorList>
            <person name="Conticello S.G."/>
            <person name="Gilad Y."/>
            <person name="Avidan N."/>
            <person name="Ben-Asher E."/>
            <person name="Levy Z."/>
            <person name="Fainzilber M."/>
        </authorList>
    </citation>
    <scope>NUCLEOTIDE SEQUENCE [MRNA]</scope>
    <source>
        <tissue>Venom duct</tissue>
    </source>
</reference>
<accession>Q9BPF3</accession>
<organism>
    <name type="scientific">Conus pennaceus</name>
    <name type="common">Feathered cone</name>
    <name type="synonym">Conus episcopus</name>
    <dbReference type="NCBI Taxonomy" id="37335"/>
    <lineage>
        <taxon>Eukaryota</taxon>
        <taxon>Metazoa</taxon>
        <taxon>Spiralia</taxon>
        <taxon>Lophotrochozoa</taxon>
        <taxon>Mollusca</taxon>
        <taxon>Gastropoda</taxon>
        <taxon>Caenogastropoda</taxon>
        <taxon>Neogastropoda</taxon>
        <taxon>Conoidea</taxon>
        <taxon>Conidae</taxon>
        <taxon>Conus</taxon>
        <taxon>Darioconus</taxon>
    </lineage>
</organism>
<proteinExistence type="inferred from homology"/>
<comment type="subcellular location">
    <subcellularLocation>
        <location evidence="4">Secreted</location>
    </subcellularLocation>
</comment>
<comment type="tissue specificity">
    <text evidence="4">Expressed by the venom duct.</text>
</comment>
<comment type="domain">
    <text evidence="3">The cysteine framework is V (CC-CC).</text>
</comment>
<comment type="PTM">
    <text evidence="3">Contains 2 disulfide bonds that can be either 'C1-C3, C2-C4' or 'C1-C4, C2-C3', since these disulfide connectivities have been observed for conotoxins with cysteine framework V (for examples, see AC P0DQQ7 and AC P81755).</text>
</comment>
<comment type="similarity">
    <text evidence="3">Belongs to the conotoxin T superfamily.</text>
</comment>
<name>CT121_CONPE</name>
<protein>
    <recommendedName>
        <fullName evidence="5">Conotoxin Pn-B01121</fullName>
    </recommendedName>
</protein>
<feature type="signal peptide" evidence="2">
    <location>
        <begin position="1"/>
        <end position="22"/>
    </location>
</feature>
<feature type="propeptide" id="PRO_0000274080" evidence="1">
    <location>
        <begin position="23"/>
        <end position="48"/>
    </location>
</feature>
<feature type="peptide" id="PRO_0000274081" description="Conotoxin Pn-B01121">
    <location>
        <begin position="51"/>
        <end position="63"/>
    </location>
</feature>
<feature type="modified residue" description="Tryptophan amide" evidence="1">
    <location>
        <position position="63"/>
    </location>
</feature>